<evidence type="ECO:0000250" key="1"/>
<evidence type="ECO:0000250" key="2">
    <source>
        <dbReference type="UniProtKB" id="P48349"/>
    </source>
</evidence>
<evidence type="ECO:0000303" key="3">
    <source ref="1"/>
</evidence>
<evidence type="ECO:0000303" key="4">
    <source ref="5"/>
</evidence>
<evidence type="ECO:0000305" key="5"/>
<reference key="1">
    <citation type="submission" date="2000-11" db="EMBL/GenBank/DDBJ databases">
        <title>Novel 14-3-3 isoforms in Arabidopsis thaliana.</title>
        <authorList>
            <person name="Alsterfjord M."/>
            <person name="Rosenquist M."/>
            <person name="Larsson C."/>
            <person name="Sommarin M."/>
        </authorList>
    </citation>
    <scope>NUCLEOTIDE SEQUENCE [MRNA] (ISOFORM 2)</scope>
    <source>
        <tissue>Leaf</tissue>
    </source>
</reference>
<reference key="2">
    <citation type="journal article" date="2000" name="Nature">
        <title>Sequence and analysis of chromosome 1 of the plant Arabidopsis thaliana.</title>
        <authorList>
            <person name="Theologis A."/>
            <person name="Ecker J.R."/>
            <person name="Palm C.J."/>
            <person name="Federspiel N.A."/>
            <person name="Kaul S."/>
            <person name="White O."/>
            <person name="Alonso J."/>
            <person name="Altafi H."/>
            <person name="Araujo R."/>
            <person name="Bowman C.L."/>
            <person name="Brooks S.Y."/>
            <person name="Buehler E."/>
            <person name="Chan A."/>
            <person name="Chao Q."/>
            <person name="Chen H."/>
            <person name="Cheuk R.F."/>
            <person name="Chin C.W."/>
            <person name="Chung M.K."/>
            <person name="Conn L."/>
            <person name="Conway A.B."/>
            <person name="Conway A.R."/>
            <person name="Creasy T.H."/>
            <person name="Dewar K."/>
            <person name="Dunn P."/>
            <person name="Etgu P."/>
            <person name="Feldblyum T.V."/>
            <person name="Feng J.-D."/>
            <person name="Fong B."/>
            <person name="Fujii C.Y."/>
            <person name="Gill J.E."/>
            <person name="Goldsmith A.D."/>
            <person name="Haas B."/>
            <person name="Hansen N.F."/>
            <person name="Hughes B."/>
            <person name="Huizar L."/>
            <person name="Hunter J.L."/>
            <person name="Jenkins J."/>
            <person name="Johnson-Hopson C."/>
            <person name="Khan S."/>
            <person name="Khaykin E."/>
            <person name="Kim C.J."/>
            <person name="Koo H.L."/>
            <person name="Kremenetskaia I."/>
            <person name="Kurtz D.B."/>
            <person name="Kwan A."/>
            <person name="Lam B."/>
            <person name="Langin-Hooper S."/>
            <person name="Lee A."/>
            <person name="Lee J.M."/>
            <person name="Lenz C.A."/>
            <person name="Li J.H."/>
            <person name="Li Y.-P."/>
            <person name="Lin X."/>
            <person name="Liu S.X."/>
            <person name="Liu Z.A."/>
            <person name="Luros J.S."/>
            <person name="Maiti R."/>
            <person name="Marziali A."/>
            <person name="Militscher J."/>
            <person name="Miranda M."/>
            <person name="Nguyen M."/>
            <person name="Nierman W.C."/>
            <person name="Osborne B.I."/>
            <person name="Pai G."/>
            <person name="Peterson J."/>
            <person name="Pham P.K."/>
            <person name="Rizzo M."/>
            <person name="Rooney T."/>
            <person name="Rowley D."/>
            <person name="Sakano H."/>
            <person name="Salzberg S.L."/>
            <person name="Schwartz J.R."/>
            <person name="Shinn P."/>
            <person name="Southwick A.M."/>
            <person name="Sun H."/>
            <person name="Tallon L.J."/>
            <person name="Tambunga G."/>
            <person name="Toriumi M.J."/>
            <person name="Town C.D."/>
            <person name="Utterback T."/>
            <person name="Van Aken S."/>
            <person name="Vaysberg M."/>
            <person name="Vysotskaia V.S."/>
            <person name="Walker M."/>
            <person name="Wu D."/>
            <person name="Yu G."/>
            <person name="Fraser C.M."/>
            <person name="Venter J.C."/>
            <person name="Davis R.W."/>
        </authorList>
    </citation>
    <scope>NUCLEOTIDE SEQUENCE [LARGE SCALE GENOMIC DNA]</scope>
    <source>
        <strain>cv. Columbia</strain>
    </source>
</reference>
<reference key="3">
    <citation type="journal article" date="2017" name="Plant J.">
        <title>Araport11: a complete reannotation of the Arabidopsis thaliana reference genome.</title>
        <authorList>
            <person name="Cheng C.Y."/>
            <person name="Krishnakumar V."/>
            <person name="Chan A.P."/>
            <person name="Thibaud-Nissen F."/>
            <person name="Schobel S."/>
            <person name="Town C.D."/>
        </authorList>
    </citation>
    <scope>GENOME REANNOTATION</scope>
    <source>
        <strain>cv. Columbia</strain>
    </source>
</reference>
<reference key="4">
    <citation type="submission" date="2006-07" db="EMBL/GenBank/DDBJ databases">
        <title>Large-scale analysis of RIKEN Arabidopsis full-length (RAFL) cDNAs.</title>
        <authorList>
            <person name="Totoki Y."/>
            <person name="Seki M."/>
            <person name="Ishida J."/>
            <person name="Nakajima M."/>
            <person name="Enju A."/>
            <person name="Kamiya A."/>
            <person name="Narusaka M."/>
            <person name="Shin-i T."/>
            <person name="Nakagawa M."/>
            <person name="Sakamoto N."/>
            <person name="Oishi K."/>
            <person name="Kohara Y."/>
            <person name="Kobayashi M."/>
            <person name="Toyoda A."/>
            <person name="Sakaki Y."/>
            <person name="Sakurai T."/>
            <person name="Iida K."/>
            <person name="Akiyama K."/>
            <person name="Satou M."/>
            <person name="Toyoda T."/>
            <person name="Konagaya A."/>
            <person name="Carninci P."/>
            <person name="Kawai J."/>
            <person name="Hayashizaki Y."/>
            <person name="Shinozaki K."/>
        </authorList>
    </citation>
    <scope>NUCLEOTIDE SEQUENCE [LARGE SCALE MRNA] (ISOFORM 1)</scope>
    <source>
        <strain>cv. Columbia</strain>
    </source>
</reference>
<reference key="5">
    <citation type="submission" date="2006-11" db="EMBL/GenBank/DDBJ databases">
        <title>Arabidopsis ORF Clones.</title>
        <authorList>
            <person name="Bautista V.R."/>
            <person name="Kim C.J."/>
            <person name="Chen H."/>
            <person name="Quinitio C."/>
            <person name="Ecker J.R."/>
        </authorList>
    </citation>
    <scope>NUCLEOTIDE SEQUENCE [LARGE SCALE MRNA] (ISOFORM 3)</scope>
    <source>
        <strain>cv. Columbia</strain>
    </source>
</reference>
<comment type="function">
    <text evidence="1">Is associated with a DNA binding complex that binds to the G box, a well-characterized cis-acting DNA regulatory element found in plant genes.</text>
</comment>
<comment type="subcellular location">
    <subcellularLocation>
        <location evidence="2">Nucleus</location>
    </subcellularLocation>
    <subcellularLocation>
        <location evidence="2">Cytoplasm</location>
    </subcellularLocation>
    <text evidence="2">Translocates from the cytosol to the nucleus when phosphorylated.</text>
</comment>
<comment type="alternative products">
    <event type="alternative splicing"/>
    <isoform>
        <id>Q9S9Z8-1</id>
        <name>1</name>
        <sequence type="displayed"/>
    </isoform>
    <isoform>
        <id>Q9S9Z8-2</id>
        <name>2</name>
        <sequence type="described" ref="VSP_042043 VSP_042044"/>
    </isoform>
    <isoform>
        <id>Q9S9Z8-3</id>
        <name>3</name>
        <sequence type="described" ref="VSP_042045"/>
    </isoform>
    <text>A number of isoforms are produced. According to EST sequences.</text>
</comment>
<comment type="similarity">
    <text evidence="5">Belongs to the 14-3-3 family.</text>
</comment>
<sequence length="252" mass="28781">MENERAKQVYLAKLNEQAERYDEMVEAMKKVAALDVELTIEERNLLSVGYKNVIGARRASWRILSSIEQKEESKGNEQNAKRIKDYRTKVEEELSKICYDILAVIDKHLVPFATSGESTVFYYKMKGDYFRYLAEFKSGADREEAADLSLKAYEAATSSASTELSTTHPIRLGLALNFSVFYYEILNSPERACHLAKRAFDEAIAELDSLNEDSYKDSTLIMQLLRDNLTLWTSDLEEGGEQSKGHNQQDEN</sequence>
<keyword id="KW-0025">Alternative splicing</keyword>
<keyword id="KW-0963">Cytoplasm</keyword>
<keyword id="KW-0539">Nucleus</keyword>
<keyword id="KW-0597">Phosphoprotein</keyword>
<keyword id="KW-1185">Reference proteome</keyword>
<proteinExistence type="evidence at transcript level"/>
<organism>
    <name type="scientific">Arabidopsis thaliana</name>
    <name type="common">Mouse-ear cress</name>
    <dbReference type="NCBI Taxonomy" id="3702"/>
    <lineage>
        <taxon>Eukaryota</taxon>
        <taxon>Viridiplantae</taxon>
        <taxon>Streptophyta</taxon>
        <taxon>Embryophyta</taxon>
        <taxon>Tracheophyta</taxon>
        <taxon>Spermatophyta</taxon>
        <taxon>Magnoliopsida</taxon>
        <taxon>eudicotyledons</taxon>
        <taxon>Gunneridae</taxon>
        <taxon>Pentapetalae</taxon>
        <taxon>rosids</taxon>
        <taxon>malvids</taxon>
        <taxon>Brassicales</taxon>
        <taxon>Brassicaceae</taxon>
        <taxon>Camelineae</taxon>
        <taxon>Arabidopsis</taxon>
    </lineage>
</organism>
<accession>Q9S9Z8</accession>
<accession>A0JQ87</accession>
<accession>F4HWN0</accession>
<accession>Q0WL19</accession>
<protein>
    <recommendedName>
        <fullName>14-3-3-like protein GF14 omicron</fullName>
    </recommendedName>
    <alternativeName>
        <fullName>General regulatory factor 11</fullName>
    </alternativeName>
</protein>
<dbReference type="EMBL" id="AF323920">
    <property type="protein sequence ID" value="AAG47840.1"/>
    <property type="molecule type" value="mRNA"/>
</dbReference>
<dbReference type="EMBL" id="AC007894">
    <property type="protein sequence ID" value="AAD46005.1"/>
    <property type="molecule type" value="Genomic_DNA"/>
</dbReference>
<dbReference type="EMBL" id="CP002684">
    <property type="protein sequence ID" value="AEE31735.1"/>
    <property type="molecule type" value="Genomic_DNA"/>
</dbReference>
<dbReference type="EMBL" id="CP002684">
    <property type="protein sequence ID" value="AEE31736.1"/>
    <property type="molecule type" value="Genomic_DNA"/>
</dbReference>
<dbReference type="EMBL" id="AK230390">
    <property type="protein sequence ID" value="BAF02188.1"/>
    <property type="molecule type" value="mRNA"/>
</dbReference>
<dbReference type="EMBL" id="BT029457">
    <property type="protein sequence ID" value="ABK59686.1"/>
    <property type="molecule type" value="mRNA"/>
</dbReference>
<dbReference type="RefSeq" id="NP_001077649.1">
    <molecule id="Q9S9Z8-1"/>
    <property type="nucleotide sequence ID" value="NM_001084180.2"/>
</dbReference>
<dbReference type="RefSeq" id="NP_564451.2">
    <molecule id="Q9S9Z8-3"/>
    <property type="nucleotide sequence ID" value="NM_103196.4"/>
</dbReference>
<dbReference type="SMR" id="Q9S9Z8"/>
<dbReference type="BioGRID" id="25612">
    <property type="interactions" value="10"/>
</dbReference>
<dbReference type="FunCoup" id="Q9S9Z8">
    <property type="interactions" value="340"/>
</dbReference>
<dbReference type="IntAct" id="Q9S9Z8">
    <property type="interactions" value="2"/>
</dbReference>
<dbReference type="STRING" id="3702.Q9S9Z8"/>
<dbReference type="iPTMnet" id="Q9S9Z8"/>
<dbReference type="PaxDb" id="3702-AT1G34760.1"/>
<dbReference type="ProteomicsDB" id="244570">
    <molecule id="Q9S9Z8-1"/>
</dbReference>
<dbReference type="EnsemblPlants" id="AT1G34760.1">
    <molecule id="Q9S9Z8-3"/>
    <property type="protein sequence ID" value="AT1G34760.1"/>
    <property type="gene ID" value="AT1G34760"/>
</dbReference>
<dbReference type="EnsemblPlants" id="AT1G34760.2">
    <molecule id="Q9S9Z8-1"/>
    <property type="protein sequence ID" value="AT1G34760.2"/>
    <property type="gene ID" value="AT1G34760"/>
</dbReference>
<dbReference type="GeneID" id="840380"/>
<dbReference type="Gramene" id="AT1G34760.1">
    <molecule id="Q9S9Z8-3"/>
    <property type="protein sequence ID" value="AT1G34760.1"/>
    <property type="gene ID" value="AT1G34760"/>
</dbReference>
<dbReference type="Gramene" id="AT1G34760.2">
    <molecule id="Q9S9Z8-1"/>
    <property type="protein sequence ID" value="AT1G34760.2"/>
    <property type="gene ID" value="AT1G34760"/>
</dbReference>
<dbReference type="KEGG" id="ath:AT1G34760"/>
<dbReference type="Araport" id="AT1G34760"/>
<dbReference type="TAIR" id="AT1G34760">
    <property type="gene designation" value="GRF11"/>
</dbReference>
<dbReference type="eggNOG" id="KOG0841">
    <property type="taxonomic scope" value="Eukaryota"/>
</dbReference>
<dbReference type="HOGENOM" id="CLU_058290_0_0_1"/>
<dbReference type="InParanoid" id="Q9S9Z8"/>
<dbReference type="OMA" id="RGHEENA"/>
<dbReference type="PRO" id="PR:Q9S9Z8"/>
<dbReference type="Proteomes" id="UP000006548">
    <property type="component" value="Chromosome 1"/>
</dbReference>
<dbReference type="ExpressionAtlas" id="Q9S9Z8">
    <property type="expression patterns" value="baseline and differential"/>
</dbReference>
<dbReference type="GO" id="GO:0005737">
    <property type="term" value="C:cytoplasm"/>
    <property type="evidence" value="ECO:0007669"/>
    <property type="project" value="UniProtKB-SubCell"/>
</dbReference>
<dbReference type="GO" id="GO:0005634">
    <property type="term" value="C:nucleus"/>
    <property type="evidence" value="ECO:0007005"/>
    <property type="project" value="TAIR"/>
</dbReference>
<dbReference type="GO" id="GO:0051117">
    <property type="term" value="F:ATPase binding"/>
    <property type="evidence" value="ECO:0000314"/>
    <property type="project" value="TAIR"/>
</dbReference>
<dbReference type="FunFam" id="1.20.190.20:FF:000002">
    <property type="entry name" value="14-3-3 protein epsilon"/>
    <property type="match status" value="1"/>
</dbReference>
<dbReference type="Gene3D" id="1.20.190.20">
    <property type="entry name" value="14-3-3 domain"/>
    <property type="match status" value="1"/>
</dbReference>
<dbReference type="InterPro" id="IPR000308">
    <property type="entry name" value="14-3-3"/>
</dbReference>
<dbReference type="InterPro" id="IPR023409">
    <property type="entry name" value="14-3-3_CS"/>
</dbReference>
<dbReference type="InterPro" id="IPR036815">
    <property type="entry name" value="14-3-3_dom_sf"/>
</dbReference>
<dbReference type="InterPro" id="IPR023410">
    <property type="entry name" value="14-3-3_domain"/>
</dbReference>
<dbReference type="PANTHER" id="PTHR18860">
    <property type="entry name" value="14-3-3 PROTEIN"/>
    <property type="match status" value="1"/>
</dbReference>
<dbReference type="Pfam" id="PF00244">
    <property type="entry name" value="14-3-3"/>
    <property type="match status" value="1"/>
</dbReference>
<dbReference type="PIRSF" id="PIRSF000868">
    <property type="entry name" value="14-3-3"/>
    <property type="match status" value="1"/>
</dbReference>
<dbReference type="PRINTS" id="PR00305">
    <property type="entry name" value="1433ZETA"/>
</dbReference>
<dbReference type="SMART" id="SM00101">
    <property type="entry name" value="14_3_3"/>
    <property type="match status" value="1"/>
</dbReference>
<dbReference type="SUPFAM" id="SSF48445">
    <property type="entry name" value="14-3-3 protein"/>
    <property type="match status" value="1"/>
</dbReference>
<dbReference type="PROSITE" id="PS00796">
    <property type="entry name" value="1433_1"/>
    <property type="match status" value="1"/>
</dbReference>
<dbReference type="PROSITE" id="PS00797">
    <property type="entry name" value="1433_2"/>
    <property type="match status" value="1"/>
</dbReference>
<gene>
    <name type="primary">GRF11</name>
    <name type="ordered locus">At1g34760</name>
    <name type="ORF">F21H2.3</name>
</gene>
<name>14311_ARATH</name>
<feature type="chain" id="PRO_0000058673" description="14-3-3-like protein GF14 omicron">
    <location>
        <begin position="1"/>
        <end position="252"/>
    </location>
</feature>
<feature type="modified residue" description="Phosphoserine" evidence="2">
    <location>
        <position position="65"/>
    </location>
</feature>
<feature type="modified residue" description="Phosphoserine" evidence="2">
    <location>
        <position position="188"/>
    </location>
</feature>
<feature type="splice variant" id="VSP_042043" description="In isoform 2." evidence="3">
    <original>E</original>
    <variation>K</variation>
    <location>
        <position position="241"/>
    </location>
</feature>
<feature type="splice variant" id="VSP_042044" description="In isoform 2." evidence="3">
    <location>
        <begin position="242"/>
        <end position="252"/>
    </location>
</feature>
<feature type="splice variant" id="VSP_042045" description="In isoform 3." evidence="4">
    <original>N</original>
    <variation>VNKI</variation>
    <location>
        <position position="252"/>
    </location>
</feature>
<feature type="sequence conflict" description="In Ref. 4; BAF02188." evidence="5" ref="4">
    <original>D</original>
    <variation>G</variation>
    <location>
        <position position="128"/>
    </location>
</feature>